<reference key="1">
    <citation type="submission" date="2009-03" db="EMBL/GenBank/DDBJ databases">
        <title>Brucella melitensis ATCC 23457 whole genome shotgun sequencing project.</title>
        <authorList>
            <person name="Setubal J.C."/>
            <person name="Boyle S."/>
            <person name="Crasta O.R."/>
            <person name="Gillespie J.J."/>
            <person name="Kenyon R.W."/>
            <person name="Lu J."/>
            <person name="Mane S."/>
            <person name="Nagrani S."/>
            <person name="Shallom J.M."/>
            <person name="Shallom S."/>
            <person name="Shukla M."/>
            <person name="Snyder E.E."/>
            <person name="Sobral B.W."/>
            <person name="Wattam A.R."/>
            <person name="Will R."/>
            <person name="Williams K."/>
            <person name="Yoo H."/>
            <person name="Munk C."/>
            <person name="Tapia R."/>
            <person name="Han C."/>
            <person name="Detter J.C."/>
            <person name="Bruce D."/>
            <person name="Brettin T.S."/>
        </authorList>
    </citation>
    <scope>NUCLEOTIDE SEQUENCE [LARGE SCALE GENOMIC DNA]</scope>
    <source>
        <strain>ATCC 23457</strain>
    </source>
</reference>
<protein>
    <recommendedName>
        <fullName evidence="1">Large ribosomal subunit protein bL25</fullName>
    </recommendedName>
    <alternativeName>
        <fullName evidence="2">50S ribosomal protein L25</fullName>
    </alternativeName>
    <alternativeName>
        <fullName evidence="1">General stress protein CTC</fullName>
    </alternativeName>
</protein>
<organism>
    <name type="scientific">Brucella melitensis biotype 2 (strain ATCC 23457)</name>
    <dbReference type="NCBI Taxonomy" id="546272"/>
    <lineage>
        <taxon>Bacteria</taxon>
        <taxon>Pseudomonadati</taxon>
        <taxon>Pseudomonadota</taxon>
        <taxon>Alphaproteobacteria</taxon>
        <taxon>Hyphomicrobiales</taxon>
        <taxon>Brucellaceae</taxon>
        <taxon>Brucella/Ochrobactrum group</taxon>
        <taxon>Brucella</taxon>
    </lineage>
</organism>
<proteinExistence type="inferred from homology"/>
<comment type="function">
    <text evidence="1">This is one of the proteins that binds to the 5S RNA in the ribosome where it forms part of the central protuberance.</text>
</comment>
<comment type="subunit">
    <text evidence="1">Part of the 50S ribosomal subunit; part of the 5S rRNA/L5/L18/L25 subcomplex. Contacts the 5S rRNA. Binds to the 5S rRNA independently of L5 and L18.</text>
</comment>
<comment type="similarity">
    <text evidence="1">Belongs to the bacterial ribosomal protein bL25 family. CTC subfamily.</text>
</comment>
<evidence type="ECO:0000255" key="1">
    <source>
        <dbReference type="HAMAP-Rule" id="MF_01334"/>
    </source>
</evidence>
<evidence type="ECO:0000305" key="2"/>
<sequence length="207" mass="22383">MSETYVLKADLRTRVGKGSSRELRRNGQIPAVIYGDKQEPLAIAVSYKEIFYKIHGGGFKTTVATIEVDGKKIQVLPKDYQLDPVRDFPQHVDFLRVSAKSVVHVNVPVHFKNEEAAPGIKRGGVLNVVRHDVELIVPANAIPEALEIDLSGLEIGDSVHISAVKLPKGATPAIQDRDFTIATIAAPAGLKSEENAEGAAEEAKDGE</sequence>
<feature type="chain" id="PRO_1000166165" description="Large ribosomal subunit protein bL25">
    <location>
        <begin position="1"/>
        <end position="207"/>
    </location>
</feature>
<name>RL25_BRUMB</name>
<accession>C0REH1</accession>
<gene>
    <name evidence="1" type="primary">rplY</name>
    <name evidence="1" type="synonym">ctc</name>
    <name type="ordered locus">BMEA_A1590</name>
</gene>
<keyword id="KW-0687">Ribonucleoprotein</keyword>
<keyword id="KW-0689">Ribosomal protein</keyword>
<keyword id="KW-0694">RNA-binding</keyword>
<keyword id="KW-0699">rRNA-binding</keyword>
<dbReference type="EMBL" id="CP001488">
    <property type="protein sequence ID" value="ACO01293.1"/>
    <property type="molecule type" value="Genomic_DNA"/>
</dbReference>
<dbReference type="RefSeq" id="WP_002964640.1">
    <property type="nucleotide sequence ID" value="NC_012441.1"/>
</dbReference>
<dbReference type="SMR" id="C0REH1"/>
<dbReference type="KEGG" id="bmi:BMEA_A1590"/>
<dbReference type="HOGENOM" id="CLU_075939_0_0_5"/>
<dbReference type="Proteomes" id="UP000001748">
    <property type="component" value="Chromosome I"/>
</dbReference>
<dbReference type="GO" id="GO:0022625">
    <property type="term" value="C:cytosolic large ribosomal subunit"/>
    <property type="evidence" value="ECO:0007669"/>
    <property type="project" value="TreeGrafter"/>
</dbReference>
<dbReference type="GO" id="GO:0008097">
    <property type="term" value="F:5S rRNA binding"/>
    <property type="evidence" value="ECO:0007669"/>
    <property type="project" value="InterPro"/>
</dbReference>
<dbReference type="GO" id="GO:0003735">
    <property type="term" value="F:structural constituent of ribosome"/>
    <property type="evidence" value="ECO:0007669"/>
    <property type="project" value="InterPro"/>
</dbReference>
<dbReference type="GO" id="GO:0006412">
    <property type="term" value="P:translation"/>
    <property type="evidence" value="ECO:0007669"/>
    <property type="project" value="UniProtKB-UniRule"/>
</dbReference>
<dbReference type="CDD" id="cd00495">
    <property type="entry name" value="Ribosomal_L25_TL5_CTC"/>
    <property type="match status" value="1"/>
</dbReference>
<dbReference type="Gene3D" id="2.170.120.20">
    <property type="entry name" value="Ribosomal protein L25, beta domain"/>
    <property type="match status" value="1"/>
</dbReference>
<dbReference type="Gene3D" id="2.40.240.10">
    <property type="entry name" value="Ribosomal Protein L25, Chain P"/>
    <property type="match status" value="1"/>
</dbReference>
<dbReference type="HAMAP" id="MF_01334">
    <property type="entry name" value="Ribosomal_bL25_CTC"/>
    <property type="match status" value="1"/>
</dbReference>
<dbReference type="InterPro" id="IPR020056">
    <property type="entry name" value="Rbsml_bL25/Gln-tRNA_synth_N"/>
</dbReference>
<dbReference type="InterPro" id="IPR011035">
    <property type="entry name" value="Ribosomal_bL25/Gln-tRNA_synth"/>
</dbReference>
<dbReference type="InterPro" id="IPR020057">
    <property type="entry name" value="Ribosomal_bL25_b-dom"/>
</dbReference>
<dbReference type="InterPro" id="IPR037121">
    <property type="entry name" value="Ribosomal_bL25_C"/>
</dbReference>
<dbReference type="InterPro" id="IPR001021">
    <property type="entry name" value="Ribosomal_bL25_long"/>
</dbReference>
<dbReference type="InterPro" id="IPR029751">
    <property type="entry name" value="Ribosomal_L25_dom"/>
</dbReference>
<dbReference type="InterPro" id="IPR020930">
    <property type="entry name" value="Ribosomal_uL5_bac-type"/>
</dbReference>
<dbReference type="NCBIfam" id="TIGR00731">
    <property type="entry name" value="bL25_bact_ctc"/>
    <property type="match status" value="1"/>
</dbReference>
<dbReference type="NCBIfam" id="NF004128">
    <property type="entry name" value="PRK05618.1-2"/>
    <property type="match status" value="1"/>
</dbReference>
<dbReference type="NCBIfam" id="NF004612">
    <property type="entry name" value="PRK05943.1"/>
    <property type="match status" value="1"/>
</dbReference>
<dbReference type="PANTHER" id="PTHR33284">
    <property type="entry name" value="RIBOSOMAL PROTEIN L25/GLN-TRNA SYNTHETASE, ANTI-CODON-BINDING DOMAIN-CONTAINING PROTEIN"/>
    <property type="match status" value="1"/>
</dbReference>
<dbReference type="PANTHER" id="PTHR33284:SF1">
    <property type="entry name" value="RIBOSOMAL PROTEIN L25_GLN-TRNA SYNTHETASE, ANTI-CODON-BINDING DOMAIN-CONTAINING PROTEIN"/>
    <property type="match status" value="1"/>
</dbReference>
<dbReference type="Pfam" id="PF01386">
    <property type="entry name" value="Ribosomal_L25p"/>
    <property type="match status" value="1"/>
</dbReference>
<dbReference type="Pfam" id="PF14693">
    <property type="entry name" value="Ribosomal_TL5_C"/>
    <property type="match status" value="1"/>
</dbReference>
<dbReference type="SUPFAM" id="SSF50715">
    <property type="entry name" value="Ribosomal protein L25-like"/>
    <property type="match status" value="1"/>
</dbReference>